<organismHost>
    <name type="scientific">Acanthamoeba polyphaga</name>
    <name type="common">Amoeba</name>
    <dbReference type="NCBI Taxonomy" id="5757"/>
</organismHost>
<dbReference type="EMBL" id="AY653733">
    <property type="protein sequence ID" value="AAV50876.1"/>
    <property type="molecule type" value="Genomic_DNA"/>
</dbReference>
<dbReference type="SMR" id="Q5UP73"/>
<dbReference type="KEGG" id="vg:9925254"/>
<dbReference type="OrthoDB" id="30546at10239"/>
<dbReference type="Proteomes" id="UP000001134">
    <property type="component" value="Genome"/>
</dbReference>
<dbReference type="GO" id="GO:0005886">
    <property type="term" value="C:plasma membrane"/>
    <property type="evidence" value="ECO:0007669"/>
    <property type="project" value="InterPro"/>
</dbReference>
<dbReference type="FunFam" id="3.30.479.30:FF:000004">
    <property type="entry name" value="Putative membrane protease family, stomatin"/>
    <property type="match status" value="1"/>
</dbReference>
<dbReference type="Gene3D" id="6.10.250.2090">
    <property type="match status" value="1"/>
</dbReference>
<dbReference type="Gene3D" id="3.30.479.30">
    <property type="entry name" value="Band 7 domain"/>
    <property type="match status" value="1"/>
</dbReference>
<dbReference type="InterPro" id="IPR043202">
    <property type="entry name" value="Band-7_stomatin-like"/>
</dbReference>
<dbReference type="InterPro" id="IPR001107">
    <property type="entry name" value="Band_7"/>
</dbReference>
<dbReference type="InterPro" id="IPR036013">
    <property type="entry name" value="Band_7/SPFH_dom_sf"/>
</dbReference>
<dbReference type="InterPro" id="IPR001972">
    <property type="entry name" value="Stomatin_HflK_fam"/>
</dbReference>
<dbReference type="PANTHER" id="PTHR10264:SF19">
    <property type="entry name" value="AT06885P-RELATED"/>
    <property type="match status" value="1"/>
</dbReference>
<dbReference type="PANTHER" id="PTHR10264">
    <property type="entry name" value="BAND 7 PROTEIN-RELATED"/>
    <property type="match status" value="1"/>
</dbReference>
<dbReference type="Pfam" id="PF01145">
    <property type="entry name" value="Band_7"/>
    <property type="match status" value="1"/>
</dbReference>
<dbReference type="PRINTS" id="PR00721">
    <property type="entry name" value="STOMATIN"/>
</dbReference>
<dbReference type="SMART" id="SM00244">
    <property type="entry name" value="PHB"/>
    <property type="match status" value="1"/>
</dbReference>
<dbReference type="SUPFAM" id="SSF117892">
    <property type="entry name" value="Band 7/SPFH domain"/>
    <property type="match status" value="1"/>
</dbReference>
<name>YR614_MIMIV</name>
<sequence length="303" mass="33771">MTDSTCPMIRNYGAIVPESQTMVKDDSELDIFSEKYREPVFASVLRSIGCFLGYACIPTNGLCGRYYPYKSISKGYRGVVQEFGRVKREINDGMHYVNPVTESISQVDMRIKVIDLDKKDVMTSDKLSIKIDSVVYYQVTNIHDALFKIDNVVQSIIELSYATLRNVIGNSTLEVCLTRRDKIAESIKSIVSEATNGWGIEIKSIQITDIVVPTDIINSLSSAIVAERQAEAKIILAQGNVKSAELMRQAADMLDSKVAMQVRSLEVIDKLATSNNSKIVFLPTDLNLSTRNNIIYSDIQSTN</sequence>
<comment type="similarity">
    <text evidence="1">Belongs to the band 7/mec-2 family.</text>
</comment>
<proteinExistence type="inferred from homology"/>
<evidence type="ECO:0000305" key="1"/>
<organism>
    <name type="scientific">Acanthamoeba polyphaga mimivirus</name>
    <name type="common">APMV</name>
    <dbReference type="NCBI Taxonomy" id="212035"/>
    <lineage>
        <taxon>Viruses</taxon>
        <taxon>Varidnaviria</taxon>
        <taxon>Bamfordvirae</taxon>
        <taxon>Nucleocytoviricota</taxon>
        <taxon>Megaviricetes</taxon>
        <taxon>Imitervirales</taxon>
        <taxon>Mimiviridae</taxon>
        <taxon>Megamimivirinae</taxon>
        <taxon>Mimivirus</taxon>
        <taxon>Mimivirus bradfordmassiliense</taxon>
    </lineage>
</organism>
<reference key="1">
    <citation type="journal article" date="2004" name="Science">
        <title>The 1.2-megabase genome sequence of Mimivirus.</title>
        <authorList>
            <person name="Raoult D."/>
            <person name="Audic S."/>
            <person name="Robert C."/>
            <person name="Abergel C."/>
            <person name="Renesto P."/>
            <person name="Ogata H."/>
            <person name="La Scola B."/>
            <person name="Susan M."/>
            <person name="Claverie J.-M."/>
        </authorList>
    </citation>
    <scope>NUCLEOTIDE SEQUENCE [LARGE SCALE GENOMIC DNA]</scope>
    <source>
        <strain>Rowbotham-Bradford</strain>
    </source>
</reference>
<keyword id="KW-1185">Reference proteome</keyword>
<gene>
    <name type="ordered locus">MIMI_R614</name>
</gene>
<feature type="chain" id="PRO_0000094068" description="Putative band 7 family protein R614">
    <location>
        <begin position="1"/>
        <end position="303"/>
    </location>
</feature>
<protein>
    <recommendedName>
        <fullName>Putative band 7 family protein R614</fullName>
    </recommendedName>
</protein>
<accession>Q5UP73</accession>